<name>APOE_EUMJU</name>
<sequence length="329" mass="37946">MKVLWAALVVALLAGCWADVEPESPLEENLEPELEPKRELEQEVEPEAGWQAGQPWELALARFWDYLRWVQTLSDQVQEEVLSNQVTQELTTLMEETMKEIKAYRAELEEQLGPMASETQARVAKELQAAQARLRSDMEDVRTRLSQYRGEVQAMLGQSTEELRARFASHMRKLRKRVLRDAEDLQKRLAVYRAGVREGAERSVSTIRERLWPLLEQARTRHAKVDALATQPLRERVNALGQQLRGRLEEVGSRARSHLDEVREQMEEVQAKMEEQANQMRQQAEAFQARLKGWFEPLVEDMQRQWAVLVEKVQAAVGTSPTTPPVETK</sequence>
<organism>
    <name type="scientific">Eumetopias jubatus</name>
    <name type="common">Steller sea lion</name>
    <name type="synonym">Phoca jubata</name>
    <dbReference type="NCBI Taxonomy" id="34886"/>
    <lineage>
        <taxon>Eukaryota</taxon>
        <taxon>Metazoa</taxon>
        <taxon>Chordata</taxon>
        <taxon>Craniata</taxon>
        <taxon>Vertebrata</taxon>
        <taxon>Euteleostomi</taxon>
        <taxon>Mammalia</taxon>
        <taxon>Eutheria</taxon>
        <taxon>Laurasiatheria</taxon>
        <taxon>Carnivora</taxon>
        <taxon>Caniformia</taxon>
        <taxon>Pinnipedia</taxon>
        <taxon>Otariidae</taxon>
        <taxon>Eumetopias</taxon>
    </lineage>
</organism>
<proteinExistence type="inferred from homology"/>
<protein>
    <recommendedName>
        <fullName>Apolipoprotein E</fullName>
        <shortName>Apo-E</shortName>
    </recommendedName>
</protein>
<feature type="signal peptide" evidence="3">
    <location>
        <begin position="1"/>
        <end position="18"/>
    </location>
</feature>
<feature type="chain" id="PRO_0000449198" description="Apolipoprotein E">
    <location>
        <begin position="19"/>
        <end position="329"/>
    </location>
</feature>
<feature type="repeat" description="1">
    <location>
        <begin position="92"/>
        <end position="113"/>
    </location>
</feature>
<feature type="repeat" description="2">
    <location>
        <begin position="114"/>
        <end position="135"/>
    </location>
</feature>
<feature type="repeat" description="3">
    <location>
        <begin position="136"/>
        <end position="157"/>
    </location>
</feature>
<feature type="repeat" description="4">
    <location>
        <begin position="158"/>
        <end position="179"/>
    </location>
</feature>
<feature type="repeat" description="5">
    <location>
        <begin position="180"/>
        <end position="201"/>
    </location>
</feature>
<feature type="repeat" description="6">
    <location>
        <begin position="202"/>
        <end position="223"/>
    </location>
</feature>
<feature type="repeat" description="7">
    <location>
        <begin position="224"/>
        <end position="245"/>
    </location>
</feature>
<feature type="repeat" description="8">
    <location>
        <begin position="246"/>
        <end position="267"/>
    </location>
</feature>
<feature type="region of interest" description="8 X 22 AA approximate tandem repeats">
    <location>
        <begin position="92"/>
        <end position="267"/>
    </location>
</feature>
<feature type="region of interest" description="LDL and other lipoprotein receptors binding" evidence="1">
    <location>
        <begin position="170"/>
        <end position="180"/>
    </location>
</feature>
<feature type="region of interest" description="Lipid-binding and lipoprotein association" evidence="1">
    <location>
        <begin position="222"/>
        <end position="302"/>
    </location>
</feature>
<feature type="region of interest" description="Homooligomerization" evidence="1">
    <location>
        <begin position="278"/>
        <end position="329"/>
    </location>
</feature>
<feature type="region of interest" description="Specificity for association with VLDL" evidence="1">
    <location>
        <begin position="290"/>
        <end position="302"/>
    </location>
</feature>
<feature type="binding site" evidence="1">
    <location>
        <begin position="174"/>
        <end position="177"/>
    </location>
    <ligand>
        <name>heparin</name>
        <dbReference type="ChEBI" id="CHEBI:28304"/>
    </ligand>
</feature>
<feature type="binding site" evidence="1">
    <location>
        <begin position="241"/>
        <end position="248"/>
    </location>
    <ligand>
        <name>heparin</name>
        <dbReference type="ChEBI" id="CHEBI:28304"/>
    </ligand>
</feature>
<feature type="modified residue" description="Methionine sulfoxide" evidence="2">
    <location>
        <position position="155"/>
    </location>
</feature>
<feature type="modified residue" description="Phosphoserine" evidence="1">
    <location>
        <position position="159"/>
    </location>
</feature>
<evidence type="ECO:0000250" key="1">
    <source>
        <dbReference type="UniProtKB" id="P02649"/>
    </source>
</evidence>
<evidence type="ECO:0000250" key="2">
    <source>
        <dbReference type="UniProtKB" id="P08226"/>
    </source>
</evidence>
<evidence type="ECO:0000255" key="3"/>
<evidence type="ECO:0000305" key="4"/>
<dbReference type="RefSeq" id="XP_027943737.1">
    <property type="nucleotide sequence ID" value="XM_028087936.1"/>
</dbReference>
<dbReference type="SMR" id="P0DTT2"/>
<dbReference type="GeneID" id="114197086"/>
<dbReference type="GO" id="GO:0042627">
    <property type="term" value="C:chylomicron"/>
    <property type="evidence" value="ECO:0007669"/>
    <property type="project" value="UniProtKB-KW"/>
</dbReference>
<dbReference type="GO" id="GO:0070062">
    <property type="term" value="C:extracellular exosome"/>
    <property type="evidence" value="ECO:0000250"/>
    <property type="project" value="UniProtKB"/>
</dbReference>
<dbReference type="GO" id="GO:0034364">
    <property type="term" value="C:high-density lipoprotein particle"/>
    <property type="evidence" value="ECO:0007669"/>
    <property type="project" value="UniProtKB-KW"/>
</dbReference>
<dbReference type="GO" id="GO:0034362">
    <property type="term" value="C:low-density lipoprotein particle"/>
    <property type="evidence" value="ECO:0007669"/>
    <property type="project" value="TreeGrafter"/>
</dbReference>
<dbReference type="GO" id="GO:0097487">
    <property type="term" value="C:multivesicular body, internal vesicle"/>
    <property type="evidence" value="ECO:0000250"/>
    <property type="project" value="UniProtKB"/>
</dbReference>
<dbReference type="GO" id="GO:0034361">
    <property type="term" value="C:very-low-density lipoprotein particle"/>
    <property type="evidence" value="ECO:0007669"/>
    <property type="project" value="UniProtKB-KW"/>
</dbReference>
<dbReference type="GO" id="GO:0120020">
    <property type="term" value="F:cholesterol transfer activity"/>
    <property type="evidence" value="ECO:0007669"/>
    <property type="project" value="TreeGrafter"/>
</dbReference>
<dbReference type="GO" id="GO:0008201">
    <property type="term" value="F:heparin binding"/>
    <property type="evidence" value="ECO:0007669"/>
    <property type="project" value="UniProtKB-KW"/>
</dbReference>
<dbReference type="GO" id="GO:0060228">
    <property type="term" value="F:phosphatidylcholine-sterol O-acyltransferase activator activity"/>
    <property type="evidence" value="ECO:0007669"/>
    <property type="project" value="TreeGrafter"/>
</dbReference>
<dbReference type="GO" id="GO:0005543">
    <property type="term" value="F:phospholipid binding"/>
    <property type="evidence" value="ECO:0007669"/>
    <property type="project" value="TreeGrafter"/>
</dbReference>
<dbReference type="GO" id="GO:0055090">
    <property type="term" value="P:acylglycerol homeostasis"/>
    <property type="evidence" value="ECO:0007669"/>
    <property type="project" value="TreeGrafter"/>
</dbReference>
<dbReference type="GO" id="GO:0033344">
    <property type="term" value="P:cholesterol efflux"/>
    <property type="evidence" value="ECO:0007669"/>
    <property type="project" value="TreeGrafter"/>
</dbReference>
<dbReference type="GO" id="GO:0008203">
    <property type="term" value="P:cholesterol metabolic process"/>
    <property type="evidence" value="ECO:0007669"/>
    <property type="project" value="TreeGrafter"/>
</dbReference>
<dbReference type="GO" id="GO:0042157">
    <property type="term" value="P:lipoprotein metabolic process"/>
    <property type="evidence" value="ECO:0007669"/>
    <property type="project" value="InterPro"/>
</dbReference>
<dbReference type="GO" id="GO:0032438">
    <property type="term" value="P:melanosome organization"/>
    <property type="evidence" value="ECO:0000250"/>
    <property type="project" value="UniProtKB"/>
</dbReference>
<dbReference type="GO" id="GO:0033700">
    <property type="term" value="P:phospholipid efflux"/>
    <property type="evidence" value="ECO:0007669"/>
    <property type="project" value="TreeGrafter"/>
</dbReference>
<dbReference type="FunFam" id="1.20.120.20:FF:000002">
    <property type="entry name" value="Apolipoprotein E"/>
    <property type="match status" value="1"/>
</dbReference>
<dbReference type="FunFam" id="1.20.120.20:FF:000003">
    <property type="entry name" value="Apolipoprotein E"/>
    <property type="match status" value="1"/>
</dbReference>
<dbReference type="Gene3D" id="1.20.120.20">
    <property type="entry name" value="Apolipoprotein"/>
    <property type="match status" value="2"/>
</dbReference>
<dbReference type="InterPro" id="IPR000074">
    <property type="entry name" value="ApoA_E"/>
</dbReference>
<dbReference type="InterPro" id="IPR050163">
    <property type="entry name" value="Apolipoprotein_A1/A4/E"/>
</dbReference>
<dbReference type="PANTHER" id="PTHR18976">
    <property type="entry name" value="APOLIPOPROTEIN"/>
    <property type="match status" value="1"/>
</dbReference>
<dbReference type="PANTHER" id="PTHR18976:SF2">
    <property type="entry name" value="APOLIPOPROTEIN E"/>
    <property type="match status" value="1"/>
</dbReference>
<dbReference type="Pfam" id="PF01442">
    <property type="entry name" value="Apolipoprotein"/>
    <property type="match status" value="1"/>
</dbReference>
<dbReference type="SUPFAM" id="SSF58113">
    <property type="entry name" value="Apolipoprotein A-I"/>
    <property type="match status" value="1"/>
</dbReference>
<keyword id="KW-0162">Chylomicron</keyword>
<keyword id="KW-0967">Endosome</keyword>
<keyword id="KW-0272">Extracellular matrix</keyword>
<keyword id="KW-0325">Glycoprotein</keyword>
<keyword id="KW-0345">HDL</keyword>
<keyword id="KW-0358">Heparin-binding</keyword>
<keyword id="KW-0445">Lipid transport</keyword>
<keyword id="KW-0446">Lipid-binding</keyword>
<keyword id="KW-0558">Oxidation</keyword>
<keyword id="KW-0597">Phosphoprotein</keyword>
<keyword id="KW-0677">Repeat</keyword>
<keyword id="KW-0964">Secreted</keyword>
<keyword id="KW-0732">Signal</keyword>
<keyword id="KW-0813">Transport</keyword>
<keyword id="KW-0850">VLDL</keyword>
<accession>P0DTT2</accession>
<gene>
    <name type="primary">APOE</name>
</gene>
<comment type="function">
    <text evidence="1">APOE is an apolipoprotein, a protein associating with lipid particles, that mainly functions in lipoprotein-mediated lipid transport between organs via the plasma and interstitial fluids. APOE is a core component of plasma lipoproteins and is involved in their production, conversion and clearance. Apolipoproteins are amphipathic molecules that interact both with lipids of the lipoprotein particle core and the aqueous environment of the plasma. As such, APOE associates with chylomicrons, chylomicron remnants, very low density lipoproteins (VLDL) and intermediate density lipoproteins (IDL) but shows a preferential binding to high-density lipoproteins (HDL). It also binds a wide range of cellular receptors including the LDL receptor/LDLR, the LDL receptor-related proteins LRP1, LRP2 and LRP8 and the very low-density lipoprotein receptor/VLDLR that mediate the cellular uptake of the APOE-containing lipoprotein particles. Finally, APOE also has a heparin-binding activity and binds heparan-sulfate proteoglycans on the surface of cells, a property that supports the capture and the receptor-mediated uptake of APOE-containing lipoproteins by cells. A main function of APOE is to mediate lipoprotein clearance through the uptake of chylomicrons, VLDLs, and HDLs by hepatocytes. APOE is also involved in the biosynthesis by the liver of VLDLs as well as their uptake by peripheral tissues ensuring the delivery of triglycerides and energy storage in muscle, heart and adipose tissues. By participating in the lipoprotein-mediated distribution of lipids among tissues, APOE plays a critical role in plasma and tissues lipid homeostasis. APOE is also involved in two steps of reverse cholesterol transport, the HDLs-mediated transport of cholesterol from peripheral tissues to the liver, and thereby plays an important role in cholesterol homeostasis. First, it is functionally associated with ABCA1 in the biogenesis of HDLs in tissues. Second, it is enriched in circulating HDLs and mediates their uptake by hepatocytes. APOE also plays an important role in lipid transport in the central nervous system, regulating neuron survival and sprouting.</text>
</comment>
<comment type="subunit">
    <text evidence="1">Homotetramer. May interact with ABCA1; functionally associated with ABCA1 in the biogenesis of HDLs. May interact with APP/A4 amyloid-beta peptide; the interaction is extremely stable in vitro but its physiological significance is unclear. May interact with MAPT. May interact with MAP2. In the cerebrospinal fluid, interacts with secreted SORL1. Interacts with PMEL; this allows the loading of PMEL luminal fragment on ILVs to induce fibril nucleation.</text>
</comment>
<comment type="subcellular location">
    <subcellularLocation>
        <location evidence="1">Secreted</location>
    </subcellularLocation>
    <subcellularLocation>
        <location evidence="1">Secreted</location>
        <location evidence="1">Extracellular space</location>
    </subcellularLocation>
    <subcellularLocation>
        <location evidence="1">Secreted</location>
        <location evidence="1">Extracellular space</location>
        <location evidence="1">Extracellular matrix</location>
    </subcellularLocation>
    <subcellularLocation>
        <location evidence="1">Extracellular vesicle</location>
    </subcellularLocation>
    <subcellularLocation>
        <location evidence="1">Endosome</location>
        <location evidence="1">Multivesicular body</location>
    </subcellularLocation>
    <text evidence="1">In the plasma, APOE is associated with chylomicrons, chylomicrons remnants, VLDL, LDL and HDL lipoproteins. Lipid poor oligomeric APOE is associated with the extracellular matrix in a calcium- and heparan-sulfate proteoglycans-dependent manner. Lipidation induces the release from the extracellular matrix. Colocalizes with CD63 and PMEL at exosomes and in intraluminal vesicles within multivesicular endosomes.</text>
</comment>
<comment type="PTM">
    <text evidence="1">APOE exists as multiple glycosylated and sialylated glycoforms within cells and in plasma. The extent of glycosylation and sialylation are tissue and context specific.</text>
</comment>
<comment type="PTM">
    <text evidence="1">Glycated in plasma VLDL.</text>
</comment>
<comment type="PTM">
    <text evidence="1">Phosphorylated by FAM20C in the extracellular medium.</text>
</comment>
<comment type="similarity">
    <text evidence="4">Belongs to the apolipoprotein A1/A4/E family.</text>
</comment>
<reference key="1">
    <citation type="journal article" date="2019" name="Genes (Basel)">
        <title>The Genome of the Steller Sea Lion (Eumetopias jubatus).</title>
        <authorList>
            <person name="Kwan H.H."/>
            <person name="Culibrk L."/>
            <person name="Taylor G.A."/>
            <person name="Leelakumari S."/>
            <person name="Tan R."/>
            <person name="Jackman S.D."/>
            <person name="Tse K."/>
            <person name="MacLeod T."/>
            <person name="Cheng D."/>
            <person name="Chuah E."/>
            <person name="Kirk H."/>
            <person name="Pandoh P."/>
            <person name="Carlsen R."/>
            <person name="Zhao Y."/>
            <person name="Mungall A.J."/>
            <person name="Moore R."/>
            <person name="Birol I."/>
            <person name="Marra M.A."/>
            <person name="Rosen D.A.S."/>
            <person name="Haulena M."/>
            <person name="Jones S.J.M."/>
        </authorList>
    </citation>
    <scope>NUCLEOTIDE SEQUENCE [LARGE SCALE GENOMIC DNA]</scope>
</reference>
<reference key="2">
    <citation type="unpublished observations" date="2019-12">
        <authorList>
            <person name="Puppione D.L."/>
        </authorList>
    </citation>
    <scope>IDENTIFICATION</scope>
</reference>